<gene>
    <name type="primary">RNASE1</name>
</gene>
<protein>
    <recommendedName>
        <fullName>Ribonuclease pancreatic</fullName>
        <ecNumber>4.6.1.18</ecNumber>
    </recommendedName>
    <alternativeName>
        <fullName>RNase 1</fullName>
    </alternativeName>
    <alternativeName>
        <fullName>RNase A</fullName>
    </alternativeName>
</protein>
<dbReference type="EC" id="4.6.1.18"/>
<dbReference type="EMBL" id="AJ005778">
    <property type="protein sequence ID" value="CAB41482.1"/>
    <property type="molecule type" value="Genomic_DNA"/>
</dbReference>
<dbReference type="SMR" id="Q9WUV4"/>
<dbReference type="GlyCosmos" id="Q9WUV4">
    <property type="glycosylation" value="2 sites, No reported glycans"/>
</dbReference>
<dbReference type="GO" id="GO:0005576">
    <property type="term" value="C:extracellular region"/>
    <property type="evidence" value="ECO:0007669"/>
    <property type="project" value="UniProtKB-SubCell"/>
</dbReference>
<dbReference type="GO" id="GO:0016829">
    <property type="term" value="F:lyase activity"/>
    <property type="evidence" value="ECO:0007669"/>
    <property type="project" value="UniProtKB-KW"/>
</dbReference>
<dbReference type="GO" id="GO:0003676">
    <property type="term" value="F:nucleic acid binding"/>
    <property type="evidence" value="ECO:0007669"/>
    <property type="project" value="InterPro"/>
</dbReference>
<dbReference type="GO" id="GO:0004522">
    <property type="term" value="F:ribonuclease A activity"/>
    <property type="evidence" value="ECO:0007669"/>
    <property type="project" value="UniProtKB-EC"/>
</dbReference>
<dbReference type="GO" id="GO:0050830">
    <property type="term" value="P:defense response to Gram-positive bacterium"/>
    <property type="evidence" value="ECO:0007669"/>
    <property type="project" value="TreeGrafter"/>
</dbReference>
<dbReference type="CDD" id="cd06265">
    <property type="entry name" value="RNase_A_canonical"/>
    <property type="match status" value="1"/>
</dbReference>
<dbReference type="FunFam" id="3.10.130.10:FF:000001">
    <property type="entry name" value="Ribonuclease pancreatic"/>
    <property type="match status" value="1"/>
</dbReference>
<dbReference type="Gene3D" id="3.10.130.10">
    <property type="entry name" value="Ribonuclease A-like domain"/>
    <property type="match status" value="1"/>
</dbReference>
<dbReference type="InterPro" id="IPR001427">
    <property type="entry name" value="RNaseA"/>
</dbReference>
<dbReference type="InterPro" id="IPR036816">
    <property type="entry name" value="RNaseA-like_dom_sf"/>
</dbReference>
<dbReference type="InterPro" id="IPR023411">
    <property type="entry name" value="RNaseA_AS"/>
</dbReference>
<dbReference type="InterPro" id="IPR023412">
    <property type="entry name" value="RNaseA_domain"/>
</dbReference>
<dbReference type="PANTHER" id="PTHR11437">
    <property type="entry name" value="RIBONUCLEASE"/>
    <property type="match status" value="1"/>
</dbReference>
<dbReference type="PANTHER" id="PTHR11437:SF24">
    <property type="entry name" value="RIBONUCLEASE PANCREATIC"/>
    <property type="match status" value="1"/>
</dbReference>
<dbReference type="Pfam" id="PF00074">
    <property type="entry name" value="RnaseA"/>
    <property type="match status" value="1"/>
</dbReference>
<dbReference type="PRINTS" id="PR00794">
    <property type="entry name" value="RIBONUCLEASE"/>
</dbReference>
<dbReference type="SMART" id="SM00092">
    <property type="entry name" value="RNAse_Pc"/>
    <property type="match status" value="1"/>
</dbReference>
<dbReference type="SUPFAM" id="SSF54076">
    <property type="entry name" value="RNase A-like"/>
    <property type="match status" value="1"/>
</dbReference>
<dbReference type="PROSITE" id="PS00127">
    <property type="entry name" value="RNASE_PANCREATIC"/>
    <property type="match status" value="1"/>
</dbReference>
<name>RNAS1_NIVCR</name>
<comment type="function">
    <text evidence="1">Endonuclease that catalyzes the cleavage of RNA on the 3' side of pyrimidine nucleotides. Acts on single-stranded and double-stranded RNA (By similarity).</text>
</comment>
<comment type="catalytic activity">
    <reaction>
        <text>an [RNA] containing cytidine + H2O = an [RNA]-3'-cytidine-3'-phosphate + a 5'-hydroxy-ribonucleotide-3'-[RNA].</text>
        <dbReference type="EC" id="4.6.1.18"/>
    </reaction>
</comment>
<comment type="catalytic activity">
    <reaction>
        <text>an [RNA] containing uridine + H2O = an [RNA]-3'-uridine-3'-phosphate + a 5'-hydroxy-ribonucleotide-3'-[RNA].</text>
        <dbReference type="EC" id="4.6.1.18"/>
    </reaction>
</comment>
<comment type="subunit">
    <text evidence="1">Monomer. Interacts with and forms tight 1:1 complexes with RNH1. Dimerization of two such complexes may occur. Interaction with RNH1 inhibits this protein (By similarity).</text>
</comment>
<comment type="subcellular location">
    <subcellularLocation>
        <location>Secreted</location>
    </subcellularLocation>
</comment>
<comment type="tissue specificity">
    <text>Pancreas.</text>
</comment>
<comment type="similarity">
    <text evidence="4">Belongs to the pancreatic ribonuclease family.</text>
</comment>
<reference key="1">
    <citation type="journal article" date="1999" name="Mol. Phylogenet. Evol.">
        <title>The phylogenetic position of 'Acomyinae' (Rodentia, Mammalia) as sister group of a Murinae + Gerbillinae clade: evidence from the nuclear ribonuclease gene.</title>
        <authorList>
            <person name="Dubois J.-Y.F."/>
            <person name="Catzeflis F.M."/>
            <person name="Beintema J.J."/>
        </authorList>
    </citation>
    <scope>NUCLEOTIDE SEQUENCE [GENOMIC DNA]</scope>
</reference>
<evidence type="ECO:0000250" key="1"/>
<evidence type="ECO:0000255" key="2"/>
<evidence type="ECO:0000256" key="3">
    <source>
        <dbReference type="SAM" id="MobiDB-lite"/>
    </source>
</evidence>
<evidence type="ECO:0000305" key="4"/>
<accession>Q9WUV4</accession>
<proteinExistence type="evidence at transcript level"/>
<sequence length="149" mass="16505">MGLEKSFILFSLLVLVLGWVQPSLSKESSADKFKRQHMDTEGSSNSSPTYCNQMMTRGDMTNGSCKPVNTFVHEPLADVQAICSQENVTCKNGKKNCYKSTSALHITDCRLKGNSKYPNCDYKTSDYQKHIIIACDGNPSVPVHFDATV</sequence>
<organism>
    <name type="scientific">Niviventer cremoriventer</name>
    <name type="common">Dark-tailed tree rat</name>
    <name type="synonym">Sundaic arboreal niviventer</name>
    <dbReference type="NCBI Taxonomy" id="69083"/>
    <lineage>
        <taxon>Eukaryota</taxon>
        <taxon>Metazoa</taxon>
        <taxon>Chordata</taxon>
        <taxon>Craniata</taxon>
        <taxon>Vertebrata</taxon>
        <taxon>Euteleostomi</taxon>
        <taxon>Mammalia</taxon>
        <taxon>Eutheria</taxon>
        <taxon>Euarchontoglires</taxon>
        <taxon>Glires</taxon>
        <taxon>Rodentia</taxon>
        <taxon>Myomorpha</taxon>
        <taxon>Muroidea</taxon>
        <taxon>Muridae</taxon>
        <taxon>Murinae</taxon>
        <taxon>Niviventer</taxon>
    </lineage>
</organism>
<feature type="signal peptide" evidence="2">
    <location>
        <begin position="1"/>
        <end position="25"/>
    </location>
</feature>
<feature type="chain" id="PRO_0000030933" description="Ribonuclease pancreatic">
    <location>
        <begin position="26"/>
        <end position="149"/>
    </location>
</feature>
<feature type="region of interest" description="Disordered" evidence="3">
    <location>
        <begin position="30"/>
        <end position="49"/>
    </location>
</feature>
<feature type="compositionally biased region" description="Basic and acidic residues" evidence="3">
    <location>
        <begin position="30"/>
        <end position="40"/>
    </location>
</feature>
<feature type="active site" description="Proton acceptor" evidence="1">
    <location>
        <position position="37"/>
    </location>
</feature>
<feature type="active site" description="Proton donor" evidence="1">
    <location>
        <position position="144"/>
    </location>
</feature>
<feature type="binding site" evidence="1">
    <location>
        <position position="32"/>
    </location>
    <ligand>
        <name>substrate</name>
    </ligand>
</feature>
<feature type="binding site" evidence="1">
    <location>
        <position position="35"/>
    </location>
    <ligand>
        <name>substrate</name>
    </ligand>
</feature>
<feature type="binding site" evidence="1">
    <location>
        <begin position="66"/>
        <end position="70"/>
    </location>
    <ligand>
        <name>substrate</name>
    </ligand>
</feature>
<feature type="binding site" evidence="1">
    <location>
        <position position="91"/>
    </location>
    <ligand>
        <name>substrate</name>
    </ligand>
</feature>
<feature type="binding site" evidence="1">
    <location>
        <position position="110"/>
    </location>
    <ligand>
        <name>substrate</name>
    </ligand>
</feature>
<feature type="glycosylation site" description="N-linked (GlcNAc...) asparagine" evidence="2">
    <location>
        <position position="62"/>
    </location>
</feature>
<feature type="glycosylation site" description="N-linked (GlcNAc...) asparagine" evidence="2">
    <location>
        <position position="87"/>
    </location>
</feature>
<feature type="disulfide bond" evidence="1">
    <location>
        <begin position="51"/>
        <end position="109"/>
    </location>
</feature>
<feature type="disulfide bond" evidence="1">
    <location>
        <begin position="65"/>
        <end position="120"/>
    </location>
</feature>
<feature type="disulfide bond" evidence="1">
    <location>
        <begin position="83"/>
        <end position="135"/>
    </location>
</feature>
<feature type="disulfide bond" evidence="1">
    <location>
        <begin position="90"/>
        <end position="97"/>
    </location>
</feature>
<keyword id="KW-1015">Disulfide bond</keyword>
<keyword id="KW-0255">Endonuclease</keyword>
<keyword id="KW-0325">Glycoprotein</keyword>
<keyword id="KW-0378">Hydrolase</keyword>
<keyword id="KW-0456">Lyase</keyword>
<keyword id="KW-0540">Nuclease</keyword>
<keyword id="KW-0964">Secreted</keyword>
<keyword id="KW-0732">Signal</keyword>